<reference key="1">
    <citation type="submission" date="2009-05" db="EMBL/GenBank/DDBJ databases">
        <title>Complete sequence of Tolumonas auensis DSM 9187.</title>
        <authorList>
            <consortium name="US DOE Joint Genome Institute"/>
            <person name="Lucas S."/>
            <person name="Copeland A."/>
            <person name="Lapidus A."/>
            <person name="Glavina del Rio T."/>
            <person name="Tice H."/>
            <person name="Bruce D."/>
            <person name="Goodwin L."/>
            <person name="Pitluck S."/>
            <person name="Chertkov O."/>
            <person name="Brettin T."/>
            <person name="Detter J.C."/>
            <person name="Han C."/>
            <person name="Larimer F."/>
            <person name="Land M."/>
            <person name="Hauser L."/>
            <person name="Kyrpides N."/>
            <person name="Mikhailova N."/>
            <person name="Spring S."/>
            <person name="Beller H."/>
        </authorList>
    </citation>
    <scope>NUCLEOTIDE SEQUENCE [LARGE SCALE GENOMIC DNA]</scope>
    <source>
        <strain>DSM 9187 / NBRC 110442 / TA 4</strain>
    </source>
</reference>
<accession>C4L7Y3</accession>
<name>FMT_TOLAT</name>
<dbReference type="EC" id="2.1.2.9" evidence="1"/>
<dbReference type="EMBL" id="CP001616">
    <property type="protein sequence ID" value="ACQ91782.1"/>
    <property type="molecule type" value="Genomic_DNA"/>
</dbReference>
<dbReference type="RefSeq" id="WP_012728381.1">
    <property type="nucleotide sequence ID" value="NC_012691.1"/>
</dbReference>
<dbReference type="SMR" id="C4L7Y3"/>
<dbReference type="STRING" id="595494.Tola_0152"/>
<dbReference type="KEGG" id="tau:Tola_0152"/>
<dbReference type="eggNOG" id="COG0223">
    <property type="taxonomic scope" value="Bacteria"/>
</dbReference>
<dbReference type="HOGENOM" id="CLU_033347_1_2_6"/>
<dbReference type="Proteomes" id="UP000009073">
    <property type="component" value="Chromosome"/>
</dbReference>
<dbReference type="GO" id="GO:0005829">
    <property type="term" value="C:cytosol"/>
    <property type="evidence" value="ECO:0007669"/>
    <property type="project" value="TreeGrafter"/>
</dbReference>
<dbReference type="GO" id="GO:0004479">
    <property type="term" value="F:methionyl-tRNA formyltransferase activity"/>
    <property type="evidence" value="ECO:0007669"/>
    <property type="project" value="UniProtKB-UniRule"/>
</dbReference>
<dbReference type="CDD" id="cd08646">
    <property type="entry name" value="FMT_core_Met-tRNA-FMT_N"/>
    <property type="match status" value="1"/>
</dbReference>
<dbReference type="CDD" id="cd08704">
    <property type="entry name" value="Met_tRNA_FMT_C"/>
    <property type="match status" value="1"/>
</dbReference>
<dbReference type="FunFam" id="3.40.50.170:FF:000003">
    <property type="entry name" value="Methionyl-tRNA formyltransferase"/>
    <property type="match status" value="1"/>
</dbReference>
<dbReference type="Gene3D" id="3.10.25.10">
    <property type="entry name" value="Formyl transferase, C-terminal domain"/>
    <property type="match status" value="1"/>
</dbReference>
<dbReference type="Gene3D" id="3.40.50.170">
    <property type="entry name" value="Formyl transferase, N-terminal domain"/>
    <property type="match status" value="1"/>
</dbReference>
<dbReference type="HAMAP" id="MF_00182">
    <property type="entry name" value="Formyl_trans"/>
    <property type="match status" value="1"/>
</dbReference>
<dbReference type="InterPro" id="IPR005794">
    <property type="entry name" value="Fmt"/>
</dbReference>
<dbReference type="InterPro" id="IPR005793">
    <property type="entry name" value="Formyl_trans_C"/>
</dbReference>
<dbReference type="InterPro" id="IPR037022">
    <property type="entry name" value="Formyl_trans_C_sf"/>
</dbReference>
<dbReference type="InterPro" id="IPR002376">
    <property type="entry name" value="Formyl_transf_N"/>
</dbReference>
<dbReference type="InterPro" id="IPR036477">
    <property type="entry name" value="Formyl_transf_N_sf"/>
</dbReference>
<dbReference type="InterPro" id="IPR011034">
    <property type="entry name" value="Formyl_transferase-like_C_sf"/>
</dbReference>
<dbReference type="InterPro" id="IPR001555">
    <property type="entry name" value="GART_AS"/>
</dbReference>
<dbReference type="InterPro" id="IPR044135">
    <property type="entry name" value="Met-tRNA-FMT_C"/>
</dbReference>
<dbReference type="InterPro" id="IPR041711">
    <property type="entry name" value="Met-tRNA-FMT_N"/>
</dbReference>
<dbReference type="NCBIfam" id="TIGR00460">
    <property type="entry name" value="fmt"/>
    <property type="match status" value="1"/>
</dbReference>
<dbReference type="PANTHER" id="PTHR11138">
    <property type="entry name" value="METHIONYL-TRNA FORMYLTRANSFERASE"/>
    <property type="match status" value="1"/>
</dbReference>
<dbReference type="PANTHER" id="PTHR11138:SF5">
    <property type="entry name" value="METHIONYL-TRNA FORMYLTRANSFERASE, MITOCHONDRIAL"/>
    <property type="match status" value="1"/>
</dbReference>
<dbReference type="Pfam" id="PF02911">
    <property type="entry name" value="Formyl_trans_C"/>
    <property type="match status" value="1"/>
</dbReference>
<dbReference type="Pfam" id="PF00551">
    <property type="entry name" value="Formyl_trans_N"/>
    <property type="match status" value="1"/>
</dbReference>
<dbReference type="SUPFAM" id="SSF50486">
    <property type="entry name" value="FMT C-terminal domain-like"/>
    <property type="match status" value="1"/>
</dbReference>
<dbReference type="SUPFAM" id="SSF53328">
    <property type="entry name" value="Formyltransferase"/>
    <property type="match status" value="1"/>
</dbReference>
<dbReference type="PROSITE" id="PS00373">
    <property type="entry name" value="GART"/>
    <property type="match status" value="1"/>
</dbReference>
<proteinExistence type="inferred from homology"/>
<feature type="chain" id="PRO_1000203879" description="Methionyl-tRNA formyltransferase">
    <location>
        <begin position="1"/>
        <end position="314"/>
    </location>
</feature>
<feature type="binding site" evidence="1">
    <location>
        <begin position="112"/>
        <end position="115"/>
    </location>
    <ligand>
        <name>(6S)-5,6,7,8-tetrahydrofolate</name>
        <dbReference type="ChEBI" id="CHEBI:57453"/>
    </ligand>
</feature>
<sequence>MHNLRIVFAGTPDFAAKHLQALLNANLQVVAVYTQPDRPAGRGNKLTPSPVKILAVEHNIPVFQPENFKSAEAQQELAALKPDLMVVVAYGLLLPQQVLDTPRLGCINVHGSLLPGWRGAAPIQRAIWAGDPETGITIMQMDAGLDTGDMLHKMVCPITPEDTSASLYEKLAIDGPEGMLFTIQQIADGTAKPEKQNNELATYAKKLSKEEACINWQQDAAFIERCIRAFNPWPVSYFKLADLNIKVWKAEVLPNTAQQSPGMIIQASKAGLDIATGNGMLRIKQLQLPGKKAMSFADVLNARQDLFLQGNILP</sequence>
<comment type="function">
    <text evidence="1">Attaches a formyl group to the free amino group of methionyl-tRNA(fMet). The formyl group appears to play a dual role in the initiator identity of N-formylmethionyl-tRNA by promoting its recognition by IF2 and preventing the misappropriation of this tRNA by the elongation apparatus.</text>
</comment>
<comment type="catalytic activity">
    <reaction evidence="1">
        <text>L-methionyl-tRNA(fMet) + (6R)-10-formyltetrahydrofolate = N-formyl-L-methionyl-tRNA(fMet) + (6S)-5,6,7,8-tetrahydrofolate + H(+)</text>
        <dbReference type="Rhea" id="RHEA:24380"/>
        <dbReference type="Rhea" id="RHEA-COMP:9952"/>
        <dbReference type="Rhea" id="RHEA-COMP:9953"/>
        <dbReference type="ChEBI" id="CHEBI:15378"/>
        <dbReference type="ChEBI" id="CHEBI:57453"/>
        <dbReference type="ChEBI" id="CHEBI:78530"/>
        <dbReference type="ChEBI" id="CHEBI:78844"/>
        <dbReference type="ChEBI" id="CHEBI:195366"/>
        <dbReference type="EC" id="2.1.2.9"/>
    </reaction>
</comment>
<comment type="similarity">
    <text evidence="1">Belongs to the Fmt family.</text>
</comment>
<organism>
    <name type="scientific">Tolumonas auensis (strain DSM 9187 / NBRC 110442 / TA 4)</name>
    <dbReference type="NCBI Taxonomy" id="595494"/>
    <lineage>
        <taxon>Bacteria</taxon>
        <taxon>Pseudomonadati</taxon>
        <taxon>Pseudomonadota</taxon>
        <taxon>Gammaproteobacteria</taxon>
        <taxon>Aeromonadales</taxon>
        <taxon>Aeromonadaceae</taxon>
        <taxon>Tolumonas</taxon>
    </lineage>
</organism>
<evidence type="ECO:0000255" key="1">
    <source>
        <dbReference type="HAMAP-Rule" id="MF_00182"/>
    </source>
</evidence>
<keyword id="KW-0648">Protein biosynthesis</keyword>
<keyword id="KW-1185">Reference proteome</keyword>
<keyword id="KW-0808">Transferase</keyword>
<gene>
    <name evidence="1" type="primary">fmt</name>
    <name type="ordered locus">Tola_0152</name>
</gene>
<protein>
    <recommendedName>
        <fullName evidence="1">Methionyl-tRNA formyltransferase</fullName>
        <ecNumber evidence="1">2.1.2.9</ecNumber>
    </recommendedName>
</protein>